<proteinExistence type="inferred from homology"/>
<evidence type="ECO:0000255" key="1">
    <source>
        <dbReference type="HAMAP-Rule" id="MF_01815"/>
    </source>
</evidence>
<name>FABH_VEREI</name>
<keyword id="KW-0012">Acyltransferase</keyword>
<keyword id="KW-0963">Cytoplasm</keyword>
<keyword id="KW-0275">Fatty acid biosynthesis</keyword>
<keyword id="KW-0276">Fatty acid metabolism</keyword>
<keyword id="KW-0444">Lipid biosynthesis</keyword>
<keyword id="KW-0443">Lipid metabolism</keyword>
<keyword id="KW-0511">Multifunctional enzyme</keyword>
<keyword id="KW-1185">Reference proteome</keyword>
<keyword id="KW-0808">Transferase</keyword>
<accession>A1WMX5</accession>
<reference key="1">
    <citation type="submission" date="2006-12" db="EMBL/GenBank/DDBJ databases">
        <title>Complete sequence of chromosome 1 of Verminephrobacter eiseniae EF01-2.</title>
        <authorList>
            <person name="Copeland A."/>
            <person name="Lucas S."/>
            <person name="Lapidus A."/>
            <person name="Barry K."/>
            <person name="Detter J.C."/>
            <person name="Glavina del Rio T."/>
            <person name="Dalin E."/>
            <person name="Tice H."/>
            <person name="Pitluck S."/>
            <person name="Chertkov O."/>
            <person name="Brettin T."/>
            <person name="Bruce D."/>
            <person name="Han C."/>
            <person name="Tapia R."/>
            <person name="Gilna P."/>
            <person name="Schmutz J."/>
            <person name="Larimer F."/>
            <person name="Land M."/>
            <person name="Hauser L."/>
            <person name="Kyrpides N."/>
            <person name="Kim E."/>
            <person name="Stahl D."/>
            <person name="Richardson P."/>
        </authorList>
    </citation>
    <scope>NUCLEOTIDE SEQUENCE [LARGE SCALE GENOMIC DNA]</scope>
    <source>
        <strain>EF01-2</strain>
    </source>
</reference>
<feature type="chain" id="PRO_1000070245" description="Beta-ketoacyl-[acyl-carrier-protein] synthase III">
    <location>
        <begin position="1"/>
        <end position="325"/>
    </location>
</feature>
<feature type="region of interest" description="ACP-binding" evidence="1">
    <location>
        <begin position="253"/>
        <end position="257"/>
    </location>
</feature>
<feature type="active site" evidence="1">
    <location>
        <position position="119"/>
    </location>
</feature>
<feature type="active site" evidence="1">
    <location>
        <position position="252"/>
    </location>
</feature>
<feature type="active site" evidence="1">
    <location>
        <position position="282"/>
    </location>
</feature>
<protein>
    <recommendedName>
        <fullName evidence="1">Beta-ketoacyl-[acyl-carrier-protein] synthase III</fullName>
        <shortName evidence="1">Beta-ketoacyl-ACP synthase III</shortName>
        <shortName evidence="1">KAS III</shortName>
        <ecNumber evidence="1">2.3.1.180</ecNumber>
    </recommendedName>
    <alternativeName>
        <fullName evidence="1">3-oxoacyl-[acyl-carrier-protein] synthase 3</fullName>
    </alternativeName>
    <alternativeName>
        <fullName evidence="1">3-oxoacyl-[acyl-carrier-protein] synthase III</fullName>
    </alternativeName>
</protein>
<gene>
    <name evidence="1" type="primary">fabH</name>
    <name type="ordered locus">Veis_3252</name>
</gene>
<dbReference type="EC" id="2.3.1.180" evidence="1"/>
<dbReference type="EMBL" id="CP000542">
    <property type="protein sequence ID" value="ABM58982.1"/>
    <property type="molecule type" value="Genomic_DNA"/>
</dbReference>
<dbReference type="RefSeq" id="WP_011810974.1">
    <property type="nucleotide sequence ID" value="NC_008786.1"/>
</dbReference>
<dbReference type="SMR" id="A1WMX5"/>
<dbReference type="STRING" id="391735.Veis_3252"/>
<dbReference type="GeneID" id="76461701"/>
<dbReference type="KEGG" id="vei:Veis_3252"/>
<dbReference type="eggNOG" id="COG0332">
    <property type="taxonomic scope" value="Bacteria"/>
</dbReference>
<dbReference type="HOGENOM" id="CLU_039592_3_1_4"/>
<dbReference type="OrthoDB" id="9815506at2"/>
<dbReference type="UniPathway" id="UPA00094"/>
<dbReference type="Proteomes" id="UP000000374">
    <property type="component" value="Chromosome"/>
</dbReference>
<dbReference type="GO" id="GO:0005737">
    <property type="term" value="C:cytoplasm"/>
    <property type="evidence" value="ECO:0007669"/>
    <property type="project" value="UniProtKB-SubCell"/>
</dbReference>
<dbReference type="GO" id="GO:0004315">
    <property type="term" value="F:3-oxoacyl-[acyl-carrier-protein] synthase activity"/>
    <property type="evidence" value="ECO:0007669"/>
    <property type="project" value="InterPro"/>
</dbReference>
<dbReference type="GO" id="GO:0033818">
    <property type="term" value="F:beta-ketoacyl-acyl-carrier-protein synthase III activity"/>
    <property type="evidence" value="ECO:0007669"/>
    <property type="project" value="UniProtKB-UniRule"/>
</dbReference>
<dbReference type="GO" id="GO:0006633">
    <property type="term" value="P:fatty acid biosynthetic process"/>
    <property type="evidence" value="ECO:0007669"/>
    <property type="project" value="UniProtKB-UniRule"/>
</dbReference>
<dbReference type="CDD" id="cd00830">
    <property type="entry name" value="KAS_III"/>
    <property type="match status" value="1"/>
</dbReference>
<dbReference type="FunFam" id="3.40.47.10:FF:000004">
    <property type="entry name" value="3-oxoacyl-[acyl-carrier-protein] synthase 3"/>
    <property type="match status" value="1"/>
</dbReference>
<dbReference type="Gene3D" id="3.40.47.10">
    <property type="match status" value="1"/>
</dbReference>
<dbReference type="HAMAP" id="MF_01815">
    <property type="entry name" value="FabH"/>
    <property type="match status" value="1"/>
</dbReference>
<dbReference type="InterPro" id="IPR013747">
    <property type="entry name" value="ACP_syn_III_C"/>
</dbReference>
<dbReference type="InterPro" id="IPR013751">
    <property type="entry name" value="ACP_syn_III_N"/>
</dbReference>
<dbReference type="InterPro" id="IPR004655">
    <property type="entry name" value="FabH"/>
</dbReference>
<dbReference type="InterPro" id="IPR016039">
    <property type="entry name" value="Thiolase-like"/>
</dbReference>
<dbReference type="NCBIfam" id="TIGR00747">
    <property type="entry name" value="fabH"/>
    <property type="match status" value="1"/>
</dbReference>
<dbReference type="NCBIfam" id="NF006829">
    <property type="entry name" value="PRK09352.1"/>
    <property type="match status" value="1"/>
</dbReference>
<dbReference type="PANTHER" id="PTHR43091">
    <property type="entry name" value="3-OXOACYL-[ACYL-CARRIER-PROTEIN] SYNTHASE"/>
    <property type="match status" value="1"/>
</dbReference>
<dbReference type="PANTHER" id="PTHR43091:SF1">
    <property type="entry name" value="BETA-KETOACYL-[ACYL-CARRIER-PROTEIN] SYNTHASE III, CHLOROPLASTIC"/>
    <property type="match status" value="1"/>
</dbReference>
<dbReference type="Pfam" id="PF08545">
    <property type="entry name" value="ACP_syn_III"/>
    <property type="match status" value="1"/>
</dbReference>
<dbReference type="Pfam" id="PF08541">
    <property type="entry name" value="ACP_syn_III_C"/>
    <property type="match status" value="1"/>
</dbReference>
<dbReference type="SUPFAM" id="SSF53901">
    <property type="entry name" value="Thiolase-like"/>
    <property type="match status" value="1"/>
</dbReference>
<comment type="function">
    <text evidence="1">Catalyzes the condensation reaction of fatty acid synthesis by the addition to an acyl acceptor of two carbons from malonyl-ACP. Catalyzes the first condensation reaction which initiates fatty acid synthesis and may therefore play a role in governing the total rate of fatty acid production. Possesses both acetoacetyl-ACP synthase and acetyl transacylase activities. Its substrate specificity determines the biosynthesis of branched-chain and/or straight-chain of fatty acids.</text>
</comment>
<comment type="catalytic activity">
    <reaction evidence="1">
        <text>malonyl-[ACP] + acetyl-CoA + H(+) = 3-oxobutanoyl-[ACP] + CO2 + CoA</text>
        <dbReference type="Rhea" id="RHEA:12080"/>
        <dbReference type="Rhea" id="RHEA-COMP:9623"/>
        <dbReference type="Rhea" id="RHEA-COMP:9625"/>
        <dbReference type="ChEBI" id="CHEBI:15378"/>
        <dbReference type="ChEBI" id="CHEBI:16526"/>
        <dbReference type="ChEBI" id="CHEBI:57287"/>
        <dbReference type="ChEBI" id="CHEBI:57288"/>
        <dbReference type="ChEBI" id="CHEBI:78449"/>
        <dbReference type="ChEBI" id="CHEBI:78450"/>
        <dbReference type="EC" id="2.3.1.180"/>
    </reaction>
</comment>
<comment type="pathway">
    <text evidence="1">Lipid metabolism; fatty acid biosynthesis.</text>
</comment>
<comment type="subunit">
    <text evidence="1">Homodimer.</text>
</comment>
<comment type="subcellular location">
    <subcellularLocation>
        <location evidence="1">Cytoplasm</location>
    </subcellularLocation>
</comment>
<comment type="domain">
    <text evidence="1">The last Arg residue of the ACP-binding site is essential for the weak association between ACP/AcpP and FabH.</text>
</comment>
<comment type="similarity">
    <text evidence="1">Belongs to the thiolase-like superfamily. FabH family.</text>
</comment>
<organism>
    <name type="scientific">Verminephrobacter eiseniae (strain EF01-2)</name>
    <dbReference type="NCBI Taxonomy" id="391735"/>
    <lineage>
        <taxon>Bacteria</taxon>
        <taxon>Pseudomonadati</taxon>
        <taxon>Pseudomonadota</taxon>
        <taxon>Betaproteobacteria</taxon>
        <taxon>Burkholderiales</taxon>
        <taxon>Comamonadaceae</taxon>
        <taxon>Verminephrobacter</taxon>
    </lineage>
</organism>
<sequence length="325" mass="33957">MRRYSRIIGTGSYLPPRRLTNADLVAELGQRGIETSDEWIVERTGIRARHFAAPDVSSSDLALQAARLALQAAGLQATDIDLIIVATSTPDMVFPAAACILQNKLGANGCPAFDLQAVCSGFVYALSVADSMVRAGAANCALVVGAEVFSRILDFNDRTTCVLFGDGAGAVVLQASATPGILCSDLKADGKHVGILCVPGNVSGGQVLGDPVLKMDGQAVFKLAIGVLEQAAHAVLAKAGLKPADVDWLIPHQANIRIMQGTARRLKMGMDKMVVTLDQHGNTSAASIPLALDHAVRMGRVKPGQTLLLQAVGGGFTWGAVLLKL</sequence>